<protein>
    <recommendedName>
        <fullName>Chelated iron transport system membrane protein YfeD</fullName>
    </recommendedName>
</protein>
<evidence type="ECO:0000255" key="1"/>
<evidence type="ECO:0000305" key="2"/>
<organism>
    <name type="scientific">Yersinia pestis</name>
    <dbReference type="NCBI Taxonomy" id="632"/>
    <lineage>
        <taxon>Bacteria</taxon>
        <taxon>Pseudomonadati</taxon>
        <taxon>Pseudomonadota</taxon>
        <taxon>Gammaproteobacteria</taxon>
        <taxon>Enterobacterales</taxon>
        <taxon>Yersiniaceae</taxon>
        <taxon>Yersinia</taxon>
    </lineage>
</organism>
<dbReference type="EMBL" id="U50597">
    <property type="protein sequence ID" value="AAC46150.1"/>
    <property type="molecule type" value="Genomic_DNA"/>
</dbReference>
<dbReference type="EMBL" id="AL590842">
    <property type="protein sequence ID" value="CAL21070.1"/>
    <property type="molecule type" value="Genomic_DNA"/>
</dbReference>
<dbReference type="EMBL" id="AE009952">
    <property type="protein sequence ID" value="AAM85461.1"/>
    <property type="molecule type" value="Genomic_DNA"/>
</dbReference>
<dbReference type="EMBL" id="AE017042">
    <property type="protein sequence ID" value="AAS62436.1"/>
    <property type="molecule type" value="Genomic_DNA"/>
</dbReference>
<dbReference type="PIR" id="AC0298">
    <property type="entry name" value="AC0298"/>
</dbReference>
<dbReference type="RefSeq" id="WP_002211845.1">
    <property type="nucleotide sequence ID" value="NZ_WUCM01000025.1"/>
</dbReference>
<dbReference type="RefSeq" id="YP_002347406.1">
    <property type="nucleotide sequence ID" value="NC_003143.1"/>
</dbReference>
<dbReference type="SMR" id="Q56955"/>
<dbReference type="STRING" id="214092.YPO2442"/>
<dbReference type="TCDB" id="3.A.1.15.4">
    <property type="family name" value="the atp-binding cassette (abc) superfamily"/>
</dbReference>
<dbReference type="PaxDb" id="214092-YPO2442"/>
<dbReference type="DNASU" id="1146841"/>
<dbReference type="EnsemblBacteria" id="AAS62436">
    <property type="protein sequence ID" value="AAS62436"/>
    <property type="gene ID" value="YP_2230"/>
</dbReference>
<dbReference type="GeneID" id="57976237"/>
<dbReference type="KEGG" id="ype:YPO2442"/>
<dbReference type="KEGG" id="ypk:y1894"/>
<dbReference type="KEGG" id="ypm:YP_2230"/>
<dbReference type="PATRIC" id="fig|1028802.3.peg.469"/>
<dbReference type="eggNOG" id="COG1108">
    <property type="taxonomic scope" value="Bacteria"/>
</dbReference>
<dbReference type="HOGENOM" id="CLU_028808_4_0_6"/>
<dbReference type="OMA" id="CALLSCW"/>
<dbReference type="OrthoDB" id="9804300at2"/>
<dbReference type="Proteomes" id="UP000000815">
    <property type="component" value="Chromosome"/>
</dbReference>
<dbReference type="Proteomes" id="UP000001019">
    <property type="component" value="Chromosome"/>
</dbReference>
<dbReference type="Proteomes" id="UP000002490">
    <property type="component" value="Chromosome"/>
</dbReference>
<dbReference type="GO" id="GO:0043190">
    <property type="term" value="C:ATP-binding cassette (ABC) transporter complex"/>
    <property type="evidence" value="ECO:0007669"/>
    <property type="project" value="InterPro"/>
</dbReference>
<dbReference type="GO" id="GO:0005886">
    <property type="term" value="C:plasma membrane"/>
    <property type="evidence" value="ECO:0000318"/>
    <property type="project" value="GO_Central"/>
</dbReference>
<dbReference type="GO" id="GO:0071281">
    <property type="term" value="P:cellular response to iron ion"/>
    <property type="evidence" value="ECO:0000269"/>
    <property type="project" value="CollecTF"/>
</dbReference>
<dbReference type="GO" id="GO:0006826">
    <property type="term" value="P:iron ion transport"/>
    <property type="evidence" value="ECO:0007669"/>
    <property type="project" value="UniProtKB-KW"/>
</dbReference>
<dbReference type="GO" id="GO:0010043">
    <property type="term" value="P:response to zinc ion"/>
    <property type="evidence" value="ECO:0000318"/>
    <property type="project" value="GO_Central"/>
</dbReference>
<dbReference type="GO" id="GO:0055085">
    <property type="term" value="P:transmembrane transport"/>
    <property type="evidence" value="ECO:0007669"/>
    <property type="project" value="InterPro"/>
</dbReference>
<dbReference type="CDD" id="cd06550">
    <property type="entry name" value="TM_ABC_iron-siderophores_like"/>
    <property type="match status" value="1"/>
</dbReference>
<dbReference type="FunFam" id="1.10.3470.10:FF:000003">
    <property type="entry name" value="Iron ABC transporter permease SitD"/>
    <property type="match status" value="1"/>
</dbReference>
<dbReference type="Gene3D" id="1.10.3470.10">
    <property type="entry name" value="ABC transporter involved in vitamin B12 uptake, BtuC"/>
    <property type="match status" value="1"/>
</dbReference>
<dbReference type="InterPro" id="IPR037294">
    <property type="entry name" value="ABC_BtuC-like"/>
</dbReference>
<dbReference type="InterPro" id="IPR001626">
    <property type="entry name" value="ABC_TroCD"/>
</dbReference>
<dbReference type="PANTHER" id="PTHR30477">
    <property type="entry name" value="ABC-TRANSPORTER METAL-BINDING PROTEIN"/>
    <property type="match status" value="1"/>
</dbReference>
<dbReference type="PANTHER" id="PTHR30477:SF24">
    <property type="entry name" value="IRON TRANSPORT SYSTEM MEMBRANE PROTEIN HI_0359-RELATED"/>
    <property type="match status" value="1"/>
</dbReference>
<dbReference type="Pfam" id="PF00950">
    <property type="entry name" value="ABC-3"/>
    <property type="match status" value="1"/>
</dbReference>
<dbReference type="SUPFAM" id="SSF81345">
    <property type="entry name" value="ABC transporter involved in vitamin B12 uptake, BtuC"/>
    <property type="match status" value="1"/>
</dbReference>
<comment type="function">
    <text>Part of an ATP-driven transport system YfeABCD for chelated iron.</text>
</comment>
<comment type="subcellular location">
    <subcellularLocation>
        <location evidence="2">Cell inner membrane</location>
        <topology evidence="2">Multi-pass membrane protein</topology>
    </subcellularLocation>
</comment>
<comment type="similarity">
    <text evidence="2">Belongs to the ABC-3 integral membrane protein family.</text>
</comment>
<feature type="chain" id="PRO_0000171157" description="Chelated iron transport system membrane protein YfeD">
    <location>
        <begin position="1"/>
        <end position="297"/>
    </location>
</feature>
<feature type="transmembrane region" description="Helical" evidence="1">
    <location>
        <begin position="20"/>
        <end position="40"/>
    </location>
</feature>
<feature type="transmembrane region" description="Helical" evidence="1">
    <location>
        <begin position="58"/>
        <end position="78"/>
    </location>
</feature>
<feature type="transmembrane region" description="Helical" evidence="1">
    <location>
        <begin position="96"/>
        <end position="116"/>
    </location>
</feature>
<feature type="transmembrane region" description="Helical" evidence="1">
    <location>
        <begin position="133"/>
        <end position="153"/>
    </location>
</feature>
<feature type="transmembrane region" description="Helical" evidence="1">
    <location>
        <begin position="172"/>
        <end position="192"/>
    </location>
</feature>
<feature type="transmembrane region" description="Helical" evidence="1">
    <location>
        <begin position="197"/>
        <end position="217"/>
    </location>
</feature>
<feature type="transmembrane region" description="Helical" evidence="1">
    <location>
        <begin position="224"/>
        <end position="244"/>
    </location>
</feature>
<feature type="transmembrane region" description="Helical" evidence="1">
    <location>
        <begin position="248"/>
        <end position="268"/>
    </location>
</feature>
<feature type="sequence conflict" description="In Ref. 1; AAC46150." evidence="2" ref="1">
    <original>C</original>
    <variation>S</variation>
    <location>
        <position position="185"/>
    </location>
</feature>
<accession>Q56955</accession>
<accession>Q0WE82</accession>
<keyword id="KW-0997">Cell inner membrane</keyword>
<keyword id="KW-1003">Cell membrane</keyword>
<keyword id="KW-0406">Ion transport</keyword>
<keyword id="KW-0408">Iron</keyword>
<keyword id="KW-0410">Iron transport</keyword>
<keyword id="KW-0472">Membrane</keyword>
<keyword id="KW-1185">Reference proteome</keyword>
<keyword id="KW-0812">Transmembrane</keyword>
<keyword id="KW-1133">Transmembrane helix</keyword>
<keyword id="KW-0813">Transport</keyword>
<reference key="1">
    <citation type="journal article" date="1998" name="J. Bacteriol.">
        <title>An ABC transporter system of Yersinia pestis allows utilization of chelated iron by Escherichia coli SAB11.</title>
        <authorList>
            <person name="Bearden S.W."/>
            <person name="Staggs T.M."/>
            <person name="Perry R.D."/>
        </authorList>
    </citation>
    <scope>NUCLEOTIDE SEQUENCE [GENOMIC DNA]</scope>
    <source>
        <strain>KIM6</strain>
    </source>
</reference>
<reference key="2">
    <citation type="journal article" date="2001" name="Nature">
        <title>Genome sequence of Yersinia pestis, the causative agent of plague.</title>
        <authorList>
            <person name="Parkhill J."/>
            <person name="Wren B.W."/>
            <person name="Thomson N.R."/>
            <person name="Titball R.W."/>
            <person name="Holden M.T.G."/>
            <person name="Prentice M.B."/>
            <person name="Sebaihia M."/>
            <person name="James K.D."/>
            <person name="Churcher C.M."/>
            <person name="Mungall K.L."/>
            <person name="Baker S."/>
            <person name="Basham D."/>
            <person name="Bentley S.D."/>
            <person name="Brooks K."/>
            <person name="Cerdeno-Tarraga A.-M."/>
            <person name="Chillingworth T."/>
            <person name="Cronin A."/>
            <person name="Davies R.M."/>
            <person name="Davis P."/>
            <person name="Dougan G."/>
            <person name="Feltwell T."/>
            <person name="Hamlin N."/>
            <person name="Holroyd S."/>
            <person name="Jagels K."/>
            <person name="Karlyshev A.V."/>
            <person name="Leather S."/>
            <person name="Moule S."/>
            <person name="Oyston P.C.F."/>
            <person name="Quail M.A."/>
            <person name="Rutherford K.M."/>
            <person name="Simmonds M."/>
            <person name="Skelton J."/>
            <person name="Stevens K."/>
            <person name="Whitehead S."/>
            <person name="Barrell B.G."/>
        </authorList>
    </citation>
    <scope>NUCLEOTIDE SEQUENCE [LARGE SCALE GENOMIC DNA]</scope>
    <source>
        <strain>CO-92 / Biovar Orientalis</strain>
    </source>
</reference>
<reference key="3">
    <citation type="journal article" date="2002" name="J. Bacteriol.">
        <title>Genome sequence of Yersinia pestis KIM.</title>
        <authorList>
            <person name="Deng W."/>
            <person name="Burland V."/>
            <person name="Plunkett G. III"/>
            <person name="Boutin A."/>
            <person name="Mayhew G.F."/>
            <person name="Liss P."/>
            <person name="Perna N.T."/>
            <person name="Rose D.J."/>
            <person name="Mau B."/>
            <person name="Zhou S."/>
            <person name="Schwartz D.C."/>
            <person name="Fetherston J.D."/>
            <person name="Lindler L.E."/>
            <person name="Brubaker R.R."/>
            <person name="Plano G.V."/>
            <person name="Straley S.C."/>
            <person name="McDonough K.A."/>
            <person name="Nilles M.L."/>
            <person name="Matson J.S."/>
            <person name="Blattner F.R."/>
            <person name="Perry R.D."/>
        </authorList>
    </citation>
    <scope>NUCLEOTIDE SEQUENCE [LARGE SCALE GENOMIC DNA]</scope>
    <source>
        <strain>KIM10+ / Biovar Mediaevalis</strain>
    </source>
</reference>
<reference key="4">
    <citation type="journal article" date="2004" name="DNA Res.">
        <title>Complete genome sequence of Yersinia pestis strain 91001, an isolate avirulent to humans.</title>
        <authorList>
            <person name="Song Y."/>
            <person name="Tong Z."/>
            <person name="Wang J."/>
            <person name="Wang L."/>
            <person name="Guo Z."/>
            <person name="Han Y."/>
            <person name="Zhang J."/>
            <person name="Pei D."/>
            <person name="Zhou D."/>
            <person name="Qin H."/>
            <person name="Pang X."/>
            <person name="Han Y."/>
            <person name="Zhai J."/>
            <person name="Li M."/>
            <person name="Cui B."/>
            <person name="Qi Z."/>
            <person name="Jin L."/>
            <person name="Dai R."/>
            <person name="Chen F."/>
            <person name="Li S."/>
            <person name="Ye C."/>
            <person name="Du Z."/>
            <person name="Lin W."/>
            <person name="Wang J."/>
            <person name="Yu J."/>
            <person name="Yang H."/>
            <person name="Wang J."/>
            <person name="Huang P."/>
            <person name="Yang R."/>
        </authorList>
    </citation>
    <scope>NUCLEOTIDE SEQUENCE [LARGE SCALE GENOMIC DNA]</scope>
    <source>
        <strain>91001 / Biovar Mediaevalis</strain>
    </source>
</reference>
<sequence length="297" mass="32203">MNMLFSLISEPFAYPFMQRAIVAAIVTGVVCAILSCYLVLKGWSLMGDAISHAVLPGIVLAFWLGIPLVIGAFVSGIFCAVATGYLKENSRVKEDTVMGIVFSGMFAFGLVLFSRIDTDQHLSHILFGNMLGISLTELKQTLWIAGFTLLVVLLKRKDFMLYCFDPNHARVIGLPVKFLHYGLLCLLALTIVASLQAVGVILVIAMLIAPGIIAFMICRSFDQMLVVATLVSVVACVLGTLISFHIDGATGPCIVIIQALFFVVALIYNHIKPIKDRKMAPLTKAVNPENTAPSNLP</sequence>
<name>YFED_YERPE</name>
<proteinExistence type="inferred from homology"/>
<gene>
    <name type="primary">yfeD</name>
    <name type="ordered locus">YPO2442</name>
    <name type="ordered locus">y1894</name>
    <name type="ordered locus">YP_2230</name>
</gene>